<evidence type="ECO:0000255" key="1">
    <source>
        <dbReference type="HAMAP-Rule" id="MF_00146"/>
    </source>
</evidence>
<evidence type="ECO:0000256" key="2">
    <source>
        <dbReference type="SAM" id="MobiDB-lite"/>
    </source>
</evidence>
<keyword id="KW-0378">Hydrolase</keyword>
<keyword id="KW-0546">Nucleotide metabolism</keyword>
<keyword id="KW-0547">Nucleotide-binding</keyword>
<keyword id="KW-1185">Reference proteome</keyword>
<dbReference type="EC" id="3.5.4.30" evidence="1"/>
<dbReference type="EMBL" id="BA000036">
    <property type="protein sequence ID" value="BAC00242.1"/>
    <property type="molecule type" value="Genomic_DNA"/>
</dbReference>
<dbReference type="EMBL" id="BX927156">
    <property type="protein sequence ID" value="CAF20874.1"/>
    <property type="molecule type" value="Genomic_DNA"/>
</dbReference>
<dbReference type="RefSeq" id="NP_602041.1">
    <property type="nucleotide sequence ID" value="NC_003450.3"/>
</dbReference>
<dbReference type="RefSeq" id="WP_003853460.1">
    <property type="nucleotide sequence ID" value="NC_006958.1"/>
</dbReference>
<dbReference type="SMR" id="Q8NLT9"/>
<dbReference type="STRING" id="196627.cg3155"/>
<dbReference type="GeneID" id="1020792"/>
<dbReference type="KEGG" id="cgb:cg3155"/>
<dbReference type="KEGG" id="cgl:Cgl2848"/>
<dbReference type="PATRIC" id="fig|196627.13.peg.2781"/>
<dbReference type="eggNOG" id="COG0717">
    <property type="taxonomic scope" value="Bacteria"/>
</dbReference>
<dbReference type="HOGENOM" id="CLU_087476_2_1_11"/>
<dbReference type="OrthoDB" id="9780956at2"/>
<dbReference type="BioCyc" id="CORYNE:G18NG-12465-MONOMER"/>
<dbReference type="UniPathway" id="UPA00610">
    <property type="reaction ID" value="UER00667"/>
</dbReference>
<dbReference type="Proteomes" id="UP000000582">
    <property type="component" value="Chromosome"/>
</dbReference>
<dbReference type="Proteomes" id="UP000001009">
    <property type="component" value="Chromosome"/>
</dbReference>
<dbReference type="GO" id="GO:0033973">
    <property type="term" value="F:dCTP deaminase (dUMP-forming) activity"/>
    <property type="evidence" value="ECO:0007669"/>
    <property type="project" value="UniProtKB-UniRule"/>
</dbReference>
<dbReference type="GO" id="GO:0008829">
    <property type="term" value="F:dCTP deaminase activity"/>
    <property type="evidence" value="ECO:0007669"/>
    <property type="project" value="InterPro"/>
</dbReference>
<dbReference type="GO" id="GO:0000166">
    <property type="term" value="F:nucleotide binding"/>
    <property type="evidence" value="ECO:0007669"/>
    <property type="project" value="UniProtKB-KW"/>
</dbReference>
<dbReference type="GO" id="GO:0006226">
    <property type="term" value="P:dUMP biosynthetic process"/>
    <property type="evidence" value="ECO:0007669"/>
    <property type="project" value="UniProtKB-UniRule"/>
</dbReference>
<dbReference type="GO" id="GO:0006229">
    <property type="term" value="P:dUTP biosynthetic process"/>
    <property type="evidence" value="ECO:0007669"/>
    <property type="project" value="InterPro"/>
</dbReference>
<dbReference type="GO" id="GO:0015949">
    <property type="term" value="P:nucleobase-containing small molecule interconversion"/>
    <property type="evidence" value="ECO:0007669"/>
    <property type="project" value="TreeGrafter"/>
</dbReference>
<dbReference type="CDD" id="cd07557">
    <property type="entry name" value="trimeric_dUTPase"/>
    <property type="match status" value="1"/>
</dbReference>
<dbReference type="FunFam" id="2.70.40.10:FF:000005">
    <property type="entry name" value="dCTP deaminase, dUMP-forming"/>
    <property type="match status" value="1"/>
</dbReference>
<dbReference type="Gene3D" id="2.70.40.10">
    <property type="match status" value="1"/>
</dbReference>
<dbReference type="HAMAP" id="MF_00146">
    <property type="entry name" value="dCTP_deaminase"/>
    <property type="match status" value="1"/>
</dbReference>
<dbReference type="InterPro" id="IPR011962">
    <property type="entry name" value="dCTP_deaminase"/>
</dbReference>
<dbReference type="InterPro" id="IPR036157">
    <property type="entry name" value="dUTPase-like_sf"/>
</dbReference>
<dbReference type="InterPro" id="IPR033704">
    <property type="entry name" value="dUTPase_trimeric"/>
</dbReference>
<dbReference type="NCBIfam" id="TIGR02274">
    <property type="entry name" value="dCTP_deam"/>
    <property type="match status" value="1"/>
</dbReference>
<dbReference type="PANTHER" id="PTHR42680">
    <property type="entry name" value="DCTP DEAMINASE"/>
    <property type="match status" value="1"/>
</dbReference>
<dbReference type="PANTHER" id="PTHR42680:SF3">
    <property type="entry name" value="DCTP DEAMINASE"/>
    <property type="match status" value="1"/>
</dbReference>
<dbReference type="Pfam" id="PF22769">
    <property type="entry name" value="DCD"/>
    <property type="match status" value="1"/>
</dbReference>
<dbReference type="SUPFAM" id="SSF51283">
    <property type="entry name" value="dUTPase-like"/>
    <property type="match status" value="1"/>
</dbReference>
<gene>
    <name evidence="1" type="primary">dcd</name>
    <name type="ordered locus">Cgl2848</name>
    <name type="ordered locus">cg3155</name>
</gene>
<name>DCDB_CORGL</name>
<accession>Q8NLT9</accession>
<comment type="function">
    <text evidence="1">Bifunctional enzyme that catalyzes both the deamination of dCTP to dUTP and the hydrolysis of dUTP to dUMP without releasing the toxic dUTP intermediate.</text>
</comment>
<comment type="catalytic activity">
    <reaction evidence="1">
        <text>dCTP + 2 H2O = dUMP + NH4(+) + diphosphate</text>
        <dbReference type="Rhea" id="RHEA:19205"/>
        <dbReference type="ChEBI" id="CHEBI:15377"/>
        <dbReference type="ChEBI" id="CHEBI:28938"/>
        <dbReference type="ChEBI" id="CHEBI:33019"/>
        <dbReference type="ChEBI" id="CHEBI:61481"/>
        <dbReference type="ChEBI" id="CHEBI:246422"/>
        <dbReference type="EC" id="3.5.4.30"/>
    </reaction>
</comment>
<comment type="pathway">
    <text evidence="1">Pyrimidine metabolism; dUMP biosynthesis; dUMP from dCTP: step 1/1.</text>
</comment>
<comment type="subunit">
    <text evidence="1">Homotrimer.</text>
</comment>
<comment type="similarity">
    <text evidence="1">Belongs to the dCTP deaminase family.</text>
</comment>
<proteinExistence type="inferred from homology"/>
<organism>
    <name type="scientific">Corynebacterium glutamicum (strain ATCC 13032 / DSM 20300 / JCM 1318 / BCRC 11384 / CCUG 27702 / LMG 3730 / NBRC 12168 / NCIMB 10025 / NRRL B-2784 / 534)</name>
    <dbReference type="NCBI Taxonomy" id="196627"/>
    <lineage>
        <taxon>Bacteria</taxon>
        <taxon>Bacillati</taxon>
        <taxon>Actinomycetota</taxon>
        <taxon>Actinomycetes</taxon>
        <taxon>Mycobacteriales</taxon>
        <taxon>Corynebacteriaceae</taxon>
        <taxon>Corynebacterium</taxon>
    </lineage>
</organism>
<protein>
    <recommendedName>
        <fullName evidence="1">dCTP deaminase, dUMP-forming</fullName>
        <ecNumber evidence="1">3.5.4.30</ecNumber>
    </recommendedName>
    <alternativeName>
        <fullName evidence="1">Bifunctional dCTP deaminase:dUTPase</fullName>
    </alternativeName>
    <alternativeName>
        <fullName evidence="1">DCD-DUT</fullName>
    </alternativeName>
</protein>
<feature type="chain" id="PRO_0000155982" description="dCTP deaminase, dUMP-forming">
    <location>
        <begin position="1"/>
        <end position="189"/>
    </location>
</feature>
<feature type="region of interest" description="Disordered" evidence="2">
    <location>
        <begin position="163"/>
        <end position="189"/>
    </location>
</feature>
<feature type="active site" description="Proton donor/acceptor" evidence="1">
    <location>
        <position position="129"/>
    </location>
</feature>
<feature type="binding site" evidence="1">
    <location>
        <begin position="101"/>
        <end position="106"/>
    </location>
    <ligand>
        <name>dCTP</name>
        <dbReference type="ChEBI" id="CHEBI:61481"/>
    </ligand>
</feature>
<feature type="binding site" evidence="1">
    <location>
        <position position="119"/>
    </location>
    <ligand>
        <name>dCTP</name>
        <dbReference type="ChEBI" id="CHEBI:61481"/>
    </ligand>
</feature>
<feature type="binding site" evidence="1">
    <location>
        <begin position="127"/>
        <end position="129"/>
    </location>
    <ligand>
        <name>dCTP</name>
        <dbReference type="ChEBI" id="CHEBI:61481"/>
    </ligand>
</feature>
<feature type="binding site" evidence="1">
    <location>
        <position position="148"/>
    </location>
    <ligand>
        <name>dCTP</name>
        <dbReference type="ChEBI" id="CHEBI:61481"/>
    </ligand>
</feature>
<feature type="binding site" evidence="1">
    <location>
        <position position="162"/>
    </location>
    <ligand>
        <name>dCTP</name>
        <dbReference type="ChEBI" id="CHEBI:61481"/>
    </ligand>
</feature>
<feature type="binding site" evidence="1">
    <location>
        <position position="170"/>
    </location>
    <ligand>
        <name>dCTP</name>
        <dbReference type="ChEBI" id="CHEBI:61481"/>
    </ligand>
</feature>
<feature type="binding site" evidence="1">
    <location>
        <position position="174"/>
    </location>
    <ligand>
        <name>dCTP</name>
        <dbReference type="ChEBI" id="CHEBI:61481"/>
    </ligand>
</feature>
<feature type="site" description="Important for bifunctional activity" evidence="1">
    <location>
        <begin position="116"/>
        <end position="117"/>
    </location>
</feature>
<reference key="1">
    <citation type="journal article" date="2003" name="Appl. Microbiol. Biotechnol.">
        <title>The Corynebacterium glutamicum genome: features and impacts on biotechnological processes.</title>
        <authorList>
            <person name="Ikeda M."/>
            <person name="Nakagawa S."/>
        </authorList>
    </citation>
    <scope>NUCLEOTIDE SEQUENCE [LARGE SCALE GENOMIC DNA]</scope>
    <source>
        <strain>ATCC 13032 / DSM 20300 / JCM 1318 / BCRC 11384 / CCUG 27702 / LMG 3730 / NBRC 12168 / NCIMB 10025 / NRRL B-2784 / 534</strain>
    </source>
</reference>
<reference key="2">
    <citation type="journal article" date="2003" name="J. Biotechnol.">
        <title>The complete Corynebacterium glutamicum ATCC 13032 genome sequence and its impact on the production of L-aspartate-derived amino acids and vitamins.</title>
        <authorList>
            <person name="Kalinowski J."/>
            <person name="Bathe B."/>
            <person name="Bartels D."/>
            <person name="Bischoff N."/>
            <person name="Bott M."/>
            <person name="Burkovski A."/>
            <person name="Dusch N."/>
            <person name="Eggeling L."/>
            <person name="Eikmanns B.J."/>
            <person name="Gaigalat L."/>
            <person name="Goesmann A."/>
            <person name="Hartmann M."/>
            <person name="Huthmacher K."/>
            <person name="Kraemer R."/>
            <person name="Linke B."/>
            <person name="McHardy A.C."/>
            <person name="Meyer F."/>
            <person name="Moeckel B."/>
            <person name="Pfefferle W."/>
            <person name="Puehler A."/>
            <person name="Rey D.A."/>
            <person name="Rueckert C."/>
            <person name="Rupp O."/>
            <person name="Sahm H."/>
            <person name="Wendisch V.F."/>
            <person name="Wiegraebe I."/>
            <person name="Tauch A."/>
        </authorList>
    </citation>
    <scope>NUCLEOTIDE SEQUENCE [LARGE SCALE GENOMIC DNA]</scope>
    <source>
        <strain>ATCC 13032 / DSM 20300 / JCM 1318 / BCRC 11384 / CCUG 27702 / LMG 3730 / NBRC 12168 / NCIMB 10025 / NRRL B-2784 / 534</strain>
    </source>
</reference>
<sequence>MLLSDRDIRKSIDAGDLGIEPFDAELIQPSSVDVRMDRYFRVFNNSKYTHIDPKLNQDELTSLVEVEDGEGFVLHPGEFVLASTLEKFTLPAHLAGRLEGKSSLGRLGLLTHSTAGFIDPGFSGYITLELSNVANLPITLWPGMKVGQLALFQMSSPAETPYGSGKLGSKYQGQRGPTPSKAYLNFPNK</sequence>